<protein>
    <recommendedName>
        <fullName evidence="1">UPF0246 protein LPC_0782</fullName>
    </recommendedName>
</protein>
<comment type="similarity">
    <text evidence="1">Belongs to the UPF0246 family.</text>
</comment>
<feature type="chain" id="PRO_1000061613" description="UPF0246 protein LPC_0782">
    <location>
        <begin position="1"/>
        <end position="257"/>
    </location>
</feature>
<name>Y782_LEGPC</name>
<gene>
    <name type="ordered locus">LPC_0782</name>
</gene>
<reference key="1">
    <citation type="submission" date="2006-11" db="EMBL/GenBank/DDBJ databases">
        <title>Identification and characterization of a new conjugation/ type IVA secretion system (trb/tra) of L. pneumophila Corby localized on a mobile genomic island.</title>
        <authorList>
            <person name="Gloeckner G."/>
            <person name="Albert-Weissenberger C."/>
            <person name="Weinmann E."/>
            <person name="Jacobi S."/>
            <person name="Schunder E."/>
            <person name="Steinert M."/>
            <person name="Buchrieser C."/>
            <person name="Hacker J."/>
            <person name="Heuner K."/>
        </authorList>
    </citation>
    <scope>NUCLEOTIDE SEQUENCE [LARGE SCALE GENOMIC DNA]</scope>
    <source>
        <strain>Corby</strain>
    </source>
</reference>
<evidence type="ECO:0000255" key="1">
    <source>
        <dbReference type="HAMAP-Rule" id="MF_00652"/>
    </source>
</evidence>
<accession>A5IBK8</accession>
<dbReference type="EMBL" id="CP000675">
    <property type="protein sequence ID" value="ABQ54758.1"/>
    <property type="molecule type" value="Genomic_DNA"/>
</dbReference>
<dbReference type="SMR" id="A5IBK8"/>
<dbReference type="KEGG" id="lpc:LPC_0782"/>
<dbReference type="HOGENOM" id="CLU_061989_0_0_6"/>
<dbReference type="GO" id="GO:0005829">
    <property type="term" value="C:cytosol"/>
    <property type="evidence" value="ECO:0007669"/>
    <property type="project" value="TreeGrafter"/>
</dbReference>
<dbReference type="GO" id="GO:0033194">
    <property type="term" value="P:response to hydroperoxide"/>
    <property type="evidence" value="ECO:0007669"/>
    <property type="project" value="TreeGrafter"/>
</dbReference>
<dbReference type="HAMAP" id="MF_00652">
    <property type="entry name" value="UPF0246"/>
    <property type="match status" value="1"/>
</dbReference>
<dbReference type="InterPro" id="IPR005583">
    <property type="entry name" value="YaaA"/>
</dbReference>
<dbReference type="NCBIfam" id="NF002542">
    <property type="entry name" value="PRK02101.1-3"/>
    <property type="match status" value="1"/>
</dbReference>
<dbReference type="PANTHER" id="PTHR30283:SF4">
    <property type="entry name" value="PEROXIDE STRESS RESISTANCE PROTEIN YAAA"/>
    <property type="match status" value="1"/>
</dbReference>
<dbReference type="PANTHER" id="PTHR30283">
    <property type="entry name" value="PEROXIDE STRESS RESPONSE PROTEIN YAAA"/>
    <property type="match status" value="1"/>
</dbReference>
<dbReference type="Pfam" id="PF03883">
    <property type="entry name" value="H2O2_YaaD"/>
    <property type="match status" value="1"/>
</dbReference>
<sequence>MLTLLSPAKKLLSISKHYSKETSNPLLLDKALQLVKIMKLKSVEQIADLMDLSRQLAELNYERYQNFDLKNNPMNHSYPALFLFQGDVYQGLNANSWKDEEIEYAQSHLGILSGLYGFLRPLDRIQPYRLEMGVNLENPAGKNLYAFWSKIVTNILNQILAEQSNPVLINLASTEYFKVVDEKKLSYPIVTINFYEQKNSELKMIGILAKKARGMMAKYIMQNRIDSIEQIKEFSESGYLFNKEISSPNSLNFIRIH</sequence>
<proteinExistence type="inferred from homology"/>
<organism>
    <name type="scientific">Legionella pneumophila (strain Corby)</name>
    <dbReference type="NCBI Taxonomy" id="400673"/>
    <lineage>
        <taxon>Bacteria</taxon>
        <taxon>Pseudomonadati</taxon>
        <taxon>Pseudomonadota</taxon>
        <taxon>Gammaproteobacteria</taxon>
        <taxon>Legionellales</taxon>
        <taxon>Legionellaceae</taxon>
        <taxon>Legionella</taxon>
    </lineage>
</organism>